<sequence>MKKPTSAPRSKAFGKQRRKTREELNQEARDRKRLKKHRGHAPGSRAAGGKPASGGGNQNQQKDPRIGSKTPIPLGVTEKVTQQHKPKSEKLMLSPQAELDLLETDERLDALLERLEAGETLNAEDQAWVDAKLDRIDELMQKLGLSYDDEEDEEEDEKQEDMMRLLRGGN</sequence>
<reference key="1">
    <citation type="submission" date="2007-11" db="EMBL/GenBank/DDBJ databases">
        <authorList>
            <consortium name="The Salmonella enterica serovar Arizonae Genome Sequencing Project"/>
            <person name="McClelland M."/>
            <person name="Sanderson E.K."/>
            <person name="Porwollik S."/>
            <person name="Spieth J."/>
            <person name="Clifton W.S."/>
            <person name="Fulton R."/>
            <person name="Chunyan W."/>
            <person name="Wollam A."/>
            <person name="Shah N."/>
            <person name="Pepin K."/>
            <person name="Bhonagiri V."/>
            <person name="Nash W."/>
            <person name="Johnson M."/>
            <person name="Thiruvilangam P."/>
            <person name="Wilson R."/>
        </authorList>
    </citation>
    <scope>NUCLEOTIDE SEQUENCE [LARGE SCALE GENOMIC DNA]</scope>
    <source>
        <strain>ATCC BAA-731 / CDC346-86 / RSK2980</strain>
    </source>
</reference>
<protein>
    <recommendedName>
        <fullName evidence="1">Der GTPase-activating protein YihI</fullName>
    </recommendedName>
</protein>
<evidence type="ECO:0000255" key="1">
    <source>
        <dbReference type="HAMAP-Rule" id="MF_01058"/>
    </source>
</evidence>
<evidence type="ECO:0000256" key="2">
    <source>
        <dbReference type="SAM" id="MobiDB-lite"/>
    </source>
</evidence>
<gene>
    <name evidence="1" type="primary">yihI</name>
    <name type="ordered locus">SARI_03657</name>
</gene>
<organism>
    <name type="scientific">Salmonella arizonae (strain ATCC BAA-731 / CDC346-86 / RSK2980)</name>
    <dbReference type="NCBI Taxonomy" id="41514"/>
    <lineage>
        <taxon>Bacteria</taxon>
        <taxon>Pseudomonadati</taxon>
        <taxon>Pseudomonadota</taxon>
        <taxon>Gammaproteobacteria</taxon>
        <taxon>Enterobacterales</taxon>
        <taxon>Enterobacteriaceae</taxon>
        <taxon>Salmonella</taxon>
    </lineage>
</organism>
<accession>A9MIV9</accession>
<dbReference type="EMBL" id="CP000880">
    <property type="protein sequence ID" value="ABX23468.1"/>
    <property type="molecule type" value="Genomic_DNA"/>
</dbReference>
<dbReference type="SMR" id="A9MIV9"/>
<dbReference type="STRING" id="41514.SARI_03657"/>
<dbReference type="KEGG" id="ses:SARI_03657"/>
<dbReference type="HOGENOM" id="CLU_094104_2_0_6"/>
<dbReference type="Proteomes" id="UP000002084">
    <property type="component" value="Chromosome"/>
</dbReference>
<dbReference type="GO" id="GO:0005096">
    <property type="term" value="F:GTPase activator activity"/>
    <property type="evidence" value="ECO:0007669"/>
    <property type="project" value="UniProtKB-KW"/>
</dbReference>
<dbReference type="GO" id="GO:0042254">
    <property type="term" value="P:ribosome biogenesis"/>
    <property type="evidence" value="ECO:0007669"/>
    <property type="project" value="UniProtKB-KW"/>
</dbReference>
<dbReference type="HAMAP" id="MF_01058">
    <property type="entry name" value="GAP_YihI"/>
    <property type="match status" value="1"/>
</dbReference>
<dbReference type="InterPro" id="IPR007336">
    <property type="entry name" value="YihI"/>
</dbReference>
<dbReference type="NCBIfam" id="NF003560">
    <property type="entry name" value="PRK05244.1-1"/>
    <property type="match status" value="1"/>
</dbReference>
<dbReference type="Pfam" id="PF04220">
    <property type="entry name" value="YihI"/>
    <property type="match status" value="1"/>
</dbReference>
<proteinExistence type="inferred from homology"/>
<feature type="chain" id="PRO_1000084455" description="Der GTPase-activating protein YihI">
    <location>
        <begin position="1"/>
        <end position="170"/>
    </location>
</feature>
<feature type="region of interest" description="Disordered" evidence="2">
    <location>
        <begin position="1"/>
        <end position="96"/>
    </location>
</feature>
<feature type="region of interest" description="Disordered" evidence="2">
    <location>
        <begin position="145"/>
        <end position="170"/>
    </location>
</feature>
<feature type="compositionally biased region" description="Basic and acidic residues" evidence="2">
    <location>
        <begin position="20"/>
        <end position="30"/>
    </location>
</feature>
<feature type="compositionally biased region" description="Basic residues" evidence="2">
    <location>
        <begin position="31"/>
        <end position="40"/>
    </location>
</feature>
<feature type="compositionally biased region" description="Acidic residues" evidence="2">
    <location>
        <begin position="147"/>
        <end position="159"/>
    </location>
</feature>
<comment type="function">
    <text evidence="1">A GTPase-activating protein (GAP) that modifies Der/EngA GTPase function. May play a role in ribosome biogenesis.</text>
</comment>
<comment type="subunit">
    <text evidence="1">Interacts with Der.</text>
</comment>
<comment type="similarity">
    <text evidence="1">Belongs to the YihI family.</text>
</comment>
<name>YIHI_SALAR</name>
<keyword id="KW-0343">GTPase activation</keyword>
<keyword id="KW-1185">Reference proteome</keyword>
<keyword id="KW-0690">Ribosome biogenesis</keyword>